<reference key="1">
    <citation type="submission" date="2009-01" db="EMBL/GenBank/DDBJ databases">
        <title>Complete sequence of chromosome of Caldicellulosiruptor becscii DSM 6725.</title>
        <authorList>
            <person name="Lucas S."/>
            <person name="Copeland A."/>
            <person name="Lapidus A."/>
            <person name="Glavina del Rio T."/>
            <person name="Tice H."/>
            <person name="Bruce D."/>
            <person name="Goodwin L."/>
            <person name="Pitluck S."/>
            <person name="Sims D."/>
            <person name="Meincke L."/>
            <person name="Brettin T."/>
            <person name="Detter J.C."/>
            <person name="Han C."/>
            <person name="Larimer F."/>
            <person name="Land M."/>
            <person name="Hauser L."/>
            <person name="Kyrpides N."/>
            <person name="Ovchinnikova G."/>
            <person name="Kataeva I."/>
            <person name="Adams M.W.W."/>
        </authorList>
    </citation>
    <scope>NUCLEOTIDE SEQUENCE [LARGE SCALE GENOMIC DNA]</scope>
    <source>
        <strain>ATCC BAA-1888 / DSM 6725 / KCTC 15123 / Z-1320</strain>
    </source>
</reference>
<feature type="chain" id="PRO_1000146116" description="Large ribosomal subunit protein bL35">
    <location>
        <begin position="1"/>
        <end position="65"/>
    </location>
</feature>
<name>RL35_CALBD</name>
<accession>B9MRK1</accession>
<evidence type="ECO:0000255" key="1">
    <source>
        <dbReference type="HAMAP-Rule" id="MF_00514"/>
    </source>
</evidence>
<evidence type="ECO:0000305" key="2"/>
<organism>
    <name type="scientific">Caldicellulosiruptor bescii (strain ATCC BAA-1888 / DSM 6725 / KCTC 15123 / Z-1320)</name>
    <name type="common">Anaerocellum thermophilum</name>
    <dbReference type="NCBI Taxonomy" id="521460"/>
    <lineage>
        <taxon>Bacteria</taxon>
        <taxon>Bacillati</taxon>
        <taxon>Bacillota</taxon>
        <taxon>Bacillota incertae sedis</taxon>
        <taxon>Caldicellulosiruptorales</taxon>
        <taxon>Caldicellulosiruptoraceae</taxon>
        <taxon>Caldicellulosiruptor</taxon>
    </lineage>
</organism>
<dbReference type="EMBL" id="CP001393">
    <property type="protein sequence ID" value="ACM60305.1"/>
    <property type="molecule type" value="Genomic_DNA"/>
</dbReference>
<dbReference type="RefSeq" id="WP_013403406.1">
    <property type="nucleotide sequence ID" value="NC_012034.1"/>
</dbReference>
<dbReference type="SMR" id="B9MRK1"/>
<dbReference type="STRING" id="521460.Athe_1205"/>
<dbReference type="GeneID" id="31772553"/>
<dbReference type="KEGG" id="ate:Athe_1205"/>
<dbReference type="eggNOG" id="COG0291">
    <property type="taxonomic scope" value="Bacteria"/>
</dbReference>
<dbReference type="HOGENOM" id="CLU_169643_4_3_9"/>
<dbReference type="Proteomes" id="UP000007723">
    <property type="component" value="Chromosome"/>
</dbReference>
<dbReference type="GO" id="GO:0015934">
    <property type="term" value="C:large ribosomal subunit"/>
    <property type="evidence" value="ECO:0007669"/>
    <property type="project" value="TreeGrafter"/>
</dbReference>
<dbReference type="GO" id="GO:0003735">
    <property type="term" value="F:structural constituent of ribosome"/>
    <property type="evidence" value="ECO:0007669"/>
    <property type="project" value="InterPro"/>
</dbReference>
<dbReference type="GO" id="GO:0006412">
    <property type="term" value="P:translation"/>
    <property type="evidence" value="ECO:0007669"/>
    <property type="project" value="UniProtKB-UniRule"/>
</dbReference>
<dbReference type="FunFam" id="4.10.410.60:FF:000001">
    <property type="entry name" value="50S ribosomal protein L35"/>
    <property type="match status" value="1"/>
</dbReference>
<dbReference type="Gene3D" id="4.10.410.60">
    <property type="match status" value="1"/>
</dbReference>
<dbReference type="HAMAP" id="MF_00514">
    <property type="entry name" value="Ribosomal_bL35"/>
    <property type="match status" value="1"/>
</dbReference>
<dbReference type="InterPro" id="IPR001706">
    <property type="entry name" value="Ribosomal_bL35"/>
</dbReference>
<dbReference type="InterPro" id="IPR021137">
    <property type="entry name" value="Ribosomal_bL35-like"/>
</dbReference>
<dbReference type="InterPro" id="IPR018265">
    <property type="entry name" value="Ribosomal_bL35_CS"/>
</dbReference>
<dbReference type="InterPro" id="IPR037229">
    <property type="entry name" value="Ribosomal_bL35_sf"/>
</dbReference>
<dbReference type="NCBIfam" id="TIGR00001">
    <property type="entry name" value="rpmI_bact"/>
    <property type="match status" value="1"/>
</dbReference>
<dbReference type="PANTHER" id="PTHR33343">
    <property type="entry name" value="54S RIBOSOMAL PROTEIN BL35M"/>
    <property type="match status" value="1"/>
</dbReference>
<dbReference type="PANTHER" id="PTHR33343:SF1">
    <property type="entry name" value="LARGE RIBOSOMAL SUBUNIT PROTEIN BL35M"/>
    <property type="match status" value="1"/>
</dbReference>
<dbReference type="Pfam" id="PF01632">
    <property type="entry name" value="Ribosomal_L35p"/>
    <property type="match status" value="1"/>
</dbReference>
<dbReference type="PRINTS" id="PR00064">
    <property type="entry name" value="RIBOSOMALL35"/>
</dbReference>
<dbReference type="SUPFAM" id="SSF143034">
    <property type="entry name" value="L35p-like"/>
    <property type="match status" value="1"/>
</dbReference>
<dbReference type="PROSITE" id="PS00936">
    <property type="entry name" value="RIBOSOMAL_L35"/>
    <property type="match status" value="1"/>
</dbReference>
<keyword id="KW-0687">Ribonucleoprotein</keyword>
<keyword id="KW-0689">Ribosomal protein</keyword>
<sequence length="65" mass="7324">MPKLKTHRGLAKRIKISGSGKYLRKKAGKSHLLSGKSRKRKRNLKKTVVVDATNVKAVKKLLPYL</sequence>
<gene>
    <name evidence="1" type="primary">rpmI</name>
    <name type="ordered locus">Athe_1205</name>
</gene>
<protein>
    <recommendedName>
        <fullName evidence="1">Large ribosomal subunit protein bL35</fullName>
    </recommendedName>
    <alternativeName>
        <fullName evidence="2">50S ribosomal protein L35</fullName>
    </alternativeName>
</protein>
<comment type="similarity">
    <text evidence="1">Belongs to the bacterial ribosomal protein bL35 family.</text>
</comment>
<proteinExistence type="inferred from homology"/>